<protein>
    <recommendedName>
        <fullName evidence="1">ATP synthase subunit b</fullName>
    </recommendedName>
    <alternativeName>
        <fullName evidence="1">ATP synthase F(0) sector subunit b</fullName>
    </alternativeName>
    <alternativeName>
        <fullName evidence="1">ATPase subunit I</fullName>
    </alternativeName>
    <alternativeName>
        <fullName evidence="1">F-type ATPase subunit b</fullName>
        <shortName evidence="1">F-ATPase subunit b</shortName>
    </alternativeName>
</protein>
<comment type="function">
    <text evidence="1">F(1)F(0) ATP synthase produces ATP from ADP in the presence of a proton or sodium gradient. F-type ATPases consist of two structural domains, F(1) containing the extramembraneous catalytic core and F(0) containing the membrane proton channel, linked together by a central stalk and a peripheral stalk. During catalysis, ATP synthesis in the catalytic domain of F(1) is coupled via a rotary mechanism of the central stalk subunits to proton translocation.</text>
</comment>
<comment type="function">
    <text evidence="1">Component of the F(0) channel, it forms part of the peripheral stalk, linking F(1) to F(0).</text>
</comment>
<comment type="subunit">
    <text evidence="1">F-type ATPases have 2 components, F(1) - the catalytic core - and F(0) - the membrane proton channel. F(1) has five subunits: alpha(3), beta(3), gamma(1), delta(1), epsilon(1). F(0) has three main subunits: a(1), b(2) and c(10-14). The alpha and beta chains form an alternating ring which encloses part of the gamma chain. F(1) is attached to F(0) by a central stalk formed by the gamma and epsilon chains, while a peripheral stalk is formed by the delta and b chains.</text>
</comment>
<comment type="subcellular location">
    <subcellularLocation>
        <location evidence="1">Cell inner membrane</location>
        <topology evidence="1">Single-pass membrane protein</topology>
    </subcellularLocation>
</comment>
<comment type="similarity">
    <text evidence="1">Belongs to the ATPase B chain family.</text>
</comment>
<reference key="1">
    <citation type="submission" date="2008-08" db="EMBL/GenBank/DDBJ databases">
        <title>The complete genome sequence of Thermodesulfovibrio yellowstonii strain ATCC 51303 / DSM 11347 / YP87.</title>
        <authorList>
            <person name="Dodson R.J."/>
            <person name="Durkin A.S."/>
            <person name="Wu M."/>
            <person name="Eisen J."/>
            <person name="Sutton G."/>
        </authorList>
    </citation>
    <scope>NUCLEOTIDE SEQUENCE [LARGE SCALE GENOMIC DNA]</scope>
    <source>
        <strain>ATCC 51303 / DSM 11347 / YP87</strain>
    </source>
</reference>
<proteinExistence type="inferred from homology"/>
<accession>B5YI20</accession>
<dbReference type="EMBL" id="CP001147">
    <property type="protein sequence ID" value="ACI21127.1"/>
    <property type="molecule type" value="Genomic_DNA"/>
</dbReference>
<dbReference type="RefSeq" id="WP_012545851.1">
    <property type="nucleotide sequence ID" value="NC_011296.1"/>
</dbReference>
<dbReference type="RefSeq" id="YP_002248086.1">
    <property type="nucleotide sequence ID" value="NC_011296.1"/>
</dbReference>
<dbReference type="SMR" id="B5YI20"/>
<dbReference type="STRING" id="289376.THEYE_A0237"/>
<dbReference type="EnsemblBacteria" id="ACI21127">
    <property type="protein sequence ID" value="ACI21127"/>
    <property type="gene ID" value="THEYE_A0237"/>
</dbReference>
<dbReference type="KEGG" id="tye:THEYE_A0237"/>
<dbReference type="PATRIC" id="fig|289376.4.peg.234"/>
<dbReference type="eggNOG" id="COG0711">
    <property type="taxonomic scope" value="Bacteria"/>
</dbReference>
<dbReference type="HOGENOM" id="CLU_079215_3_2_0"/>
<dbReference type="InParanoid" id="B5YI20"/>
<dbReference type="OrthoDB" id="5471016at2"/>
<dbReference type="Proteomes" id="UP000000718">
    <property type="component" value="Chromosome"/>
</dbReference>
<dbReference type="GO" id="GO:0005886">
    <property type="term" value="C:plasma membrane"/>
    <property type="evidence" value="ECO:0007669"/>
    <property type="project" value="UniProtKB-SubCell"/>
</dbReference>
<dbReference type="GO" id="GO:0045259">
    <property type="term" value="C:proton-transporting ATP synthase complex"/>
    <property type="evidence" value="ECO:0007669"/>
    <property type="project" value="UniProtKB-KW"/>
</dbReference>
<dbReference type="GO" id="GO:0046933">
    <property type="term" value="F:proton-transporting ATP synthase activity, rotational mechanism"/>
    <property type="evidence" value="ECO:0007669"/>
    <property type="project" value="UniProtKB-UniRule"/>
</dbReference>
<dbReference type="CDD" id="cd06503">
    <property type="entry name" value="ATP-synt_Fo_b"/>
    <property type="match status" value="1"/>
</dbReference>
<dbReference type="HAMAP" id="MF_01398">
    <property type="entry name" value="ATP_synth_b_bprime"/>
    <property type="match status" value="1"/>
</dbReference>
<dbReference type="InterPro" id="IPR002146">
    <property type="entry name" value="ATP_synth_b/b'su_bac/chlpt"/>
</dbReference>
<dbReference type="InterPro" id="IPR005864">
    <property type="entry name" value="ATP_synth_F0_bsu_bac"/>
</dbReference>
<dbReference type="InterPro" id="IPR050059">
    <property type="entry name" value="ATP_synthase_B_chain"/>
</dbReference>
<dbReference type="NCBIfam" id="TIGR01144">
    <property type="entry name" value="ATP_synt_b"/>
    <property type="match status" value="1"/>
</dbReference>
<dbReference type="PANTHER" id="PTHR33445:SF1">
    <property type="entry name" value="ATP SYNTHASE SUBUNIT B"/>
    <property type="match status" value="1"/>
</dbReference>
<dbReference type="PANTHER" id="PTHR33445">
    <property type="entry name" value="ATP SYNTHASE SUBUNIT B', CHLOROPLASTIC"/>
    <property type="match status" value="1"/>
</dbReference>
<dbReference type="Pfam" id="PF00430">
    <property type="entry name" value="ATP-synt_B"/>
    <property type="match status" value="1"/>
</dbReference>
<feature type="chain" id="PRO_0000368839" description="ATP synthase subunit b">
    <location>
        <begin position="1"/>
        <end position="188"/>
    </location>
</feature>
<feature type="transmembrane region" description="Helical" evidence="1">
    <location>
        <begin position="5"/>
        <end position="25"/>
    </location>
</feature>
<sequence length="188" mass="21583">MKGKMLLIFMMIVMIASSAMAAEAEHAGGDLKDWAFKVINFAILVFIIVKFLGKPIKNYFAQRKELIEKSIRESQEAKELAQKALQEVEEKLKLKDKEVQDILDTAKKIGEQEKIQIVQESEKLKEKILEQAKTNIEFEVKMAKDALRLEAAELAIQLSEQKLKEKITPEEQEKLLQESIKIIEGRKN</sequence>
<name>ATPF_THEYD</name>
<evidence type="ECO:0000255" key="1">
    <source>
        <dbReference type="HAMAP-Rule" id="MF_01398"/>
    </source>
</evidence>
<gene>
    <name evidence="1" type="primary">atpF</name>
    <name type="ordered locus">THEYE_A0237</name>
</gene>
<keyword id="KW-0066">ATP synthesis</keyword>
<keyword id="KW-0997">Cell inner membrane</keyword>
<keyword id="KW-1003">Cell membrane</keyword>
<keyword id="KW-0138">CF(0)</keyword>
<keyword id="KW-0375">Hydrogen ion transport</keyword>
<keyword id="KW-0406">Ion transport</keyword>
<keyword id="KW-0472">Membrane</keyword>
<keyword id="KW-1185">Reference proteome</keyword>
<keyword id="KW-0812">Transmembrane</keyword>
<keyword id="KW-1133">Transmembrane helix</keyword>
<keyword id="KW-0813">Transport</keyword>
<organism>
    <name type="scientific">Thermodesulfovibrio yellowstonii (strain ATCC 51303 / DSM 11347 / YP87)</name>
    <dbReference type="NCBI Taxonomy" id="289376"/>
    <lineage>
        <taxon>Bacteria</taxon>
        <taxon>Pseudomonadati</taxon>
        <taxon>Nitrospirota</taxon>
        <taxon>Thermodesulfovibrionia</taxon>
        <taxon>Thermodesulfovibrionales</taxon>
        <taxon>Thermodesulfovibrionaceae</taxon>
        <taxon>Thermodesulfovibrio</taxon>
    </lineage>
</organism>